<comment type="function">
    <text evidence="2">Binds weakly to the muscarinic acetylcholine receptor (CHRM).</text>
</comment>
<comment type="subunit">
    <text evidence="5">Monomer.</text>
</comment>
<comment type="subcellular location">
    <subcellularLocation>
        <location evidence="2">Secreted</location>
    </subcellularLocation>
</comment>
<comment type="tissue specificity">
    <text evidence="4">Expressed by the venom gland.</text>
</comment>
<comment type="mass spectrometry"/>
<comment type="miscellaneous">
    <text evidence="4">Is classified as a P-type cytotoxin, since a proline residue stands at position 33 (Pro-31 in standard classification).</text>
</comment>
<comment type="similarity">
    <text evidence="4">Belongs to the three-finger toxin family. Short-chain subfamily. Type C muscarinic toxin sub-subfamily.</text>
</comment>
<proteinExistence type="evidence at protein level"/>
<keyword id="KW-0903">Direct protein sequencing</keyword>
<keyword id="KW-1015">Disulfide bond</keyword>
<keyword id="KW-1214">G-protein coupled acetylcholine receptor impairing toxin</keyword>
<keyword id="KW-1213">G-protein coupled receptor impairing toxin</keyword>
<keyword id="KW-0528">Neurotoxin</keyword>
<keyword id="KW-0629">Postsynaptic neurotoxin</keyword>
<keyword id="KW-0964">Secreted</keyword>
<keyword id="KW-0800">Toxin</keyword>
<organism>
    <name type="scientific">Naja kaouthia</name>
    <name type="common">Monocled cobra</name>
    <name type="synonym">Naja siamensis</name>
    <dbReference type="NCBI Taxonomy" id="8649"/>
    <lineage>
        <taxon>Eukaryota</taxon>
        <taxon>Metazoa</taxon>
        <taxon>Chordata</taxon>
        <taxon>Craniata</taxon>
        <taxon>Vertebrata</taxon>
        <taxon>Euteleostomi</taxon>
        <taxon>Lepidosauria</taxon>
        <taxon>Squamata</taxon>
        <taxon>Bifurcata</taxon>
        <taxon>Unidentata</taxon>
        <taxon>Episquamata</taxon>
        <taxon>Toxicofera</taxon>
        <taxon>Serpentes</taxon>
        <taxon>Colubroidea</taxon>
        <taxon>Elapidae</taxon>
        <taxon>Elapinae</taxon>
        <taxon>Naja</taxon>
    </lineage>
</organism>
<dbReference type="SMR" id="P82462"/>
<dbReference type="GO" id="GO:0005576">
    <property type="term" value="C:extracellular region"/>
    <property type="evidence" value="ECO:0007669"/>
    <property type="project" value="UniProtKB-SubCell"/>
</dbReference>
<dbReference type="GO" id="GO:0090729">
    <property type="term" value="F:toxin activity"/>
    <property type="evidence" value="ECO:0007669"/>
    <property type="project" value="UniProtKB-KW"/>
</dbReference>
<dbReference type="CDD" id="cd00206">
    <property type="entry name" value="TFP_snake_toxin"/>
    <property type="match status" value="1"/>
</dbReference>
<dbReference type="FunFam" id="2.10.60.10:FF:000024">
    <property type="entry name" value="Cytotoxin 1"/>
    <property type="match status" value="1"/>
</dbReference>
<dbReference type="Gene3D" id="2.10.60.10">
    <property type="entry name" value="CD59"/>
    <property type="match status" value="1"/>
</dbReference>
<dbReference type="InterPro" id="IPR003571">
    <property type="entry name" value="Snake_3FTx"/>
</dbReference>
<dbReference type="InterPro" id="IPR045860">
    <property type="entry name" value="Snake_toxin-like_sf"/>
</dbReference>
<dbReference type="InterPro" id="IPR018354">
    <property type="entry name" value="Snake_toxin_con_site"/>
</dbReference>
<dbReference type="InterPro" id="IPR054131">
    <property type="entry name" value="Toxin_cobra-type"/>
</dbReference>
<dbReference type="Pfam" id="PF21947">
    <property type="entry name" value="Toxin_cobra-type"/>
    <property type="match status" value="1"/>
</dbReference>
<dbReference type="SUPFAM" id="SSF57302">
    <property type="entry name" value="Snake toxin-like"/>
    <property type="match status" value="1"/>
</dbReference>
<dbReference type="PROSITE" id="PS00272">
    <property type="entry name" value="SNAKE_TOXIN"/>
    <property type="match status" value="1"/>
</dbReference>
<accession>P82462</accession>
<protein>
    <recommendedName>
        <fullName evidence="3">Muscarinic toxin-like protein 1</fullName>
        <shortName evidence="3">MTLP-1</shortName>
    </recommendedName>
</protein>
<reference key="1">
    <citation type="journal article" date="2000" name="Eur. J. Biochem.">
        <title>Muscarinic toxin-like proteins from cobra venom.</title>
        <authorList>
            <person name="Kukhtina V.V."/>
            <person name="Weise C."/>
            <person name="Muranova T.A."/>
            <person name="Starkov V.G."/>
            <person name="Franke P."/>
            <person name="Hucho F."/>
            <person name="Wnendt S."/>
            <person name="Gillen C."/>
            <person name="Tsetlin V.I."/>
            <person name="Utkin Y.N."/>
        </authorList>
    </citation>
    <scope>PROTEIN SEQUENCE</scope>
    <scope>FUNCTION</scope>
    <scope>MASS SPECTROMETRY</scope>
    <scope>SUBCELLULAR LOCATION</scope>
    <source>
        <tissue>Venom</tissue>
    </source>
</reference>
<evidence type="ECO:0000250" key="1">
    <source>
        <dbReference type="UniProtKB" id="P60301"/>
    </source>
</evidence>
<evidence type="ECO:0000269" key="2">
    <source>
    </source>
</evidence>
<evidence type="ECO:0000303" key="3">
    <source>
    </source>
</evidence>
<evidence type="ECO:0000305" key="4"/>
<evidence type="ECO:0000305" key="5">
    <source>
    </source>
</evidence>
<name>3SUC1_NAJKA</name>
<feature type="chain" id="PRO_0000093650" description="Muscarinic toxin-like protein 1" evidence="2">
    <location>
        <begin position="1"/>
        <end position="65"/>
    </location>
</feature>
<feature type="disulfide bond" evidence="1">
    <location>
        <begin position="3"/>
        <end position="24"/>
    </location>
</feature>
<feature type="disulfide bond" evidence="1">
    <location>
        <begin position="17"/>
        <end position="42"/>
    </location>
</feature>
<feature type="disulfide bond" evidence="1">
    <location>
        <begin position="46"/>
        <end position="57"/>
    </location>
</feature>
<feature type="disulfide bond" evidence="1">
    <location>
        <begin position="58"/>
        <end position="63"/>
    </location>
</feature>
<sequence>LICVKEKFLFSETTETCPDGQNVCFNQAHLIYPGKYKRTRGCAATCPKLQNRDVIFCCSTDKCNL</sequence>